<feature type="chain" id="PRO_0000199821" description="Phosphopentomutase">
    <location>
        <begin position="1"/>
        <end position="407"/>
    </location>
</feature>
<feature type="binding site" evidence="1">
    <location>
        <position position="10"/>
    </location>
    <ligand>
        <name>Mn(2+)</name>
        <dbReference type="ChEBI" id="CHEBI:29035"/>
        <label>1</label>
    </ligand>
</feature>
<feature type="binding site" evidence="1">
    <location>
        <position position="306"/>
    </location>
    <ligand>
        <name>Mn(2+)</name>
        <dbReference type="ChEBI" id="CHEBI:29035"/>
        <label>2</label>
    </ligand>
</feature>
<feature type="binding site" evidence="1">
    <location>
        <position position="311"/>
    </location>
    <ligand>
        <name>Mn(2+)</name>
        <dbReference type="ChEBI" id="CHEBI:29035"/>
        <label>2</label>
    </ligand>
</feature>
<feature type="binding site" evidence="1">
    <location>
        <position position="347"/>
    </location>
    <ligand>
        <name>Mn(2+)</name>
        <dbReference type="ChEBI" id="CHEBI:29035"/>
        <label>1</label>
    </ligand>
</feature>
<feature type="binding site" evidence="1">
    <location>
        <position position="348"/>
    </location>
    <ligand>
        <name>Mn(2+)</name>
        <dbReference type="ChEBI" id="CHEBI:29035"/>
        <label>1</label>
    </ligand>
</feature>
<feature type="binding site" evidence="1">
    <location>
        <position position="359"/>
    </location>
    <ligand>
        <name>Mn(2+)</name>
        <dbReference type="ChEBI" id="CHEBI:29035"/>
        <label>2</label>
    </ligand>
</feature>
<organism>
    <name type="scientific">Escherichia coli O157:H7</name>
    <dbReference type="NCBI Taxonomy" id="83334"/>
    <lineage>
        <taxon>Bacteria</taxon>
        <taxon>Pseudomonadati</taxon>
        <taxon>Pseudomonadota</taxon>
        <taxon>Gammaproteobacteria</taxon>
        <taxon>Enterobacterales</taxon>
        <taxon>Enterobacteriaceae</taxon>
        <taxon>Escherichia</taxon>
    </lineage>
</organism>
<proteinExistence type="inferred from homology"/>
<accession>P0A6K8</accession>
<accession>P07651</accession>
<evidence type="ECO:0000255" key="1">
    <source>
        <dbReference type="HAMAP-Rule" id="MF_00740"/>
    </source>
</evidence>
<evidence type="ECO:0000305" key="2"/>
<name>DEOB_ECO57</name>
<gene>
    <name evidence="1" type="primary">deoB</name>
    <name type="synonym">drm</name>
    <name type="synonym">thyR</name>
    <name type="ordered locus">Z5985</name>
    <name type="ordered locus">ECs5342</name>
</gene>
<dbReference type="EC" id="5.4.2.7" evidence="1"/>
<dbReference type="EMBL" id="AE005174">
    <property type="protein sequence ID" value="AAG59564.1"/>
    <property type="molecule type" value="Genomic_DNA"/>
</dbReference>
<dbReference type="EMBL" id="BA000007">
    <property type="protein sequence ID" value="BAB38765.1"/>
    <property type="molecule type" value="Genomic_DNA"/>
</dbReference>
<dbReference type="PIR" id="F91296">
    <property type="entry name" value="F91296"/>
</dbReference>
<dbReference type="PIR" id="H86137">
    <property type="entry name" value="H86137"/>
</dbReference>
<dbReference type="RefSeq" id="NP_313369.1">
    <property type="nucleotide sequence ID" value="NC_002695.1"/>
</dbReference>
<dbReference type="RefSeq" id="WP_000816471.1">
    <property type="nucleotide sequence ID" value="NZ_VOAI01000002.1"/>
</dbReference>
<dbReference type="SMR" id="P0A6K8"/>
<dbReference type="STRING" id="155864.Z5985"/>
<dbReference type="GeneID" id="89519362"/>
<dbReference type="GeneID" id="913501"/>
<dbReference type="KEGG" id="ece:Z5985"/>
<dbReference type="KEGG" id="ecs:ECs_5342"/>
<dbReference type="PATRIC" id="fig|386585.9.peg.5589"/>
<dbReference type="eggNOG" id="COG1015">
    <property type="taxonomic scope" value="Bacteria"/>
</dbReference>
<dbReference type="HOGENOM" id="CLU_053861_0_0_6"/>
<dbReference type="OMA" id="SGHWEMM"/>
<dbReference type="UniPathway" id="UPA00002">
    <property type="reaction ID" value="UER00467"/>
</dbReference>
<dbReference type="Proteomes" id="UP000000558">
    <property type="component" value="Chromosome"/>
</dbReference>
<dbReference type="Proteomes" id="UP000002519">
    <property type="component" value="Chromosome"/>
</dbReference>
<dbReference type="GO" id="GO:0005829">
    <property type="term" value="C:cytosol"/>
    <property type="evidence" value="ECO:0007669"/>
    <property type="project" value="TreeGrafter"/>
</dbReference>
<dbReference type="GO" id="GO:0000287">
    <property type="term" value="F:magnesium ion binding"/>
    <property type="evidence" value="ECO:0007669"/>
    <property type="project" value="InterPro"/>
</dbReference>
<dbReference type="GO" id="GO:0030145">
    <property type="term" value="F:manganese ion binding"/>
    <property type="evidence" value="ECO:0007669"/>
    <property type="project" value="UniProtKB-UniRule"/>
</dbReference>
<dbReference type="GO" id="GO:0008973">
    <property type="term" value="F:phosphopentomutase activity"/>
    <property type="evidence" value="ECO:0007669"/>
    <property type="project" value="UniProtKB-UniRule"/>
</dbReference>
<dbReference type="GO" id="GO:0006018">
    <property type="term" value="P:2-deoxyribose 1-phosphate catabolic process"/>
    <property type="evidence" value="ECO:0007669"/>
    <property type="project" value="UniProtKB-UniRule"/>
</dbReference>
<dbReference type="GO" id="GO:0006015">
    <property type="term" value="P:5-phosphoribose 1-diphosphate biosynthetic process"/>
    <property type="evidence" value="ECO:0007669"/>
    <property type="project" value="UniProtKB-UniPathway"/>
</dbReference>
<dbReference type="GO" id="GO:0043094">
    <property type="term" value="P:metabolic compound salvage"/>
    <property type="evidence" value="ECO:0007669"/>
    <property type="project" value="InterPro"/>
</dbReference>
<dbReference type="GO" id="GO:0009117">
    <property type="term" value="P:nucleotide metabolic process"/>
    <property type="evidence" value="ECO:0007669"/>
    <property type="project" value="InterPro"/>
</dbReference>
<dbReference type="CDD" id="cd16009">
    <property type="entry name" value="PPM"/>
    <property type="match status" value="1"/>
</dbReference>
<dbReference type="FunFam" id="3.30.70.1250:FF:000001">
    <property type="entry name" value="Phosphopentomutase"/>
    <property type="match status" value="1"/>
</dbReference>
<dbReference type="Gene3D" id="3.40.720.10">
    <property type="entry name" value="Alkaline Phosphatase, subunit A"/>
    <property type="match status" value="1"/>
</dbReference>
<dbReference type="Gene3D" id="3.30.70.1250">
    <property type="entry name" value="Phosphopentomutase"/>
    <property type="match status" value="1"/>
</dbReference>
<dbReference type="HAMAP" id="MF_00740">
    <property type="entry name" value="Phosphopentomut"/>
    <property type="match status" value="1"/>
</dbReference>
<dbReference type="InterPro" id="IPR017850">
    <property type="entry name" value="Alkaline_phosphatase_core_sf"/>
</dbReference>
<dbReference type="InterPro" id="IPR010045">
    <property type="entry name" value="DeoB"/>
</dbReference>
<dbReference type="InterPro" id="IPR006124">
    <property type="entry name" value="Metalloenzyme"/>
</dbReference>
<dbReference type="InterPro" id="IPR024052">
    <property type="entry name" value="Phosphopentomutase_DeoB_cap_sf"/>
</dbReference>
<dbReference type="NCBIfam" id="TIGR01696">
    <property type="entry name" value="deoB"/>
    <property type="match status" value="1"/>
</dbReference>
<dbReference type="NCBIfam" id="NF003766">
    <property type="entry name" value="PRK05362.1"/>
    <property type="match status" value="1"/>
</dbReference>
<dbReference type="PANTHER" id="PTHR21110">
    <property type="entry name" value="PHOSPHOPENTOMUTASE"/>
    <property type="match status" value="1"/>
</dbReference>
<dbReference type="PANTHER" id="PTHR21110:SF0">
    <property type="entry name" value="PHOSPHOPENTOMUTASE"/>
    <property type="match status" value="1"/>
</dbReference>
<dbReference type="Pfam" id="PF01676">
    <property type="entry name" value="Metalloenzyme"/>
    <property type="match status" value="1"/>
</dbReference>
<dbReference type="PIRSF" id="PIRSF001491">
    <property type="entry name" value="Ppentomutase"/>
    <property type="match status" value="1"/>
</dbReference>
<dbReference type="SUPFAM" id="SSF53649">
    <property type="entry name" value="Alkaline phosphatase-like"/>
    <property type="match status" value="1"/>
</dbReference>
<dbReference type="SUPFAM" id="SSF143856">
    <property type="entry name" value="DeoB insert domain-like"/>
    <property type="match status" value="1"/>
</dbReference>
<keyword id="KW-0963">Cytoplasm</keyword>
<keyword id="KW-0413">Isomerase</keyword>
<keyword id="KW-0464">Manganese</keyword>
<keyword id="KW-0479">Metal-binding</keyword>
<keyword id="KW-1185">Reference proteome</keyword>
<sequence>MKRAFIMVLDSFGIGATEDAERFGDVGADTLGHIAEACAKGEADNGRKGPLNLPNLTRLGLAKAHEGSTGFIPAGMDGNAEVIGAYAWAHEMSSGKDTPSGHWEIAGVPVLFEWGYFSDHENSFPQELLDKLVERANLPGYLGNCHSSGTVILDQLGEEHMKTGKPIFYTSADSVFQIACHEETFGLDKLYELCEIAREELTNGGYNIGRVIARPFIGDKAGNFQRTGNRHDLAVEPPAPTVLQKLVDEKHGQVVSVGKIADIYANCGITKKVKATGLDALFDATIKEMKEAGDNTIVFTNFVDFDSSWGHRRDVAGYAAGLELFDRRLPELMSLLRDDDILILTADHGCDPTWTGTDHTREHIPVLVYGPKVKPGSLGHRETFADIGQTLAKYFGTSDMEYGKAMF</sequence>
<reference key="1">
    <citation type="journal article" date="2001" name="Nature">
        <title>Genome sequence of enterohaemorrhagic Escherichia coli O157:H7.</title>
        <authorList>
            <person name="Perna N.T."/>
            <person name="Plunkett G. III"/>
            <person name="Burland V."/>
            <person name="Mau B."/>
            <person name="Glasner J.D."/>
            <person name="Rose D.J."/>
            <person name="Mayhew G.F."/>
            <person name="Evans P.S."/>
            <person name="Gregor J."/>
            <person name="Kirkpatrick H.A."/>
            <person name="Posfai G."/>
            <person name="Hackett J."/>
            <person name="Klink S."/>
            <person name="Boutin A."/>
            <person name="Shao Y."/>
            <person name="Miller L."/>
            <person name="Grotbeck E.J."/>
            <person name="Davis N.W."/>
            <person name="Lim A."/>
            <person name="Dimalanta E.T."/>
            <person name="Potamousis K."/>
            <person name="Apodaca J."/>
            <person name="Anantharaman T.S."/>
            <person name="Lin J."/>
            <person name="Yen G."/>
            <person name="Schwartz D.C."/>
            <person name="Welch R.A."/>
            <person name="Blattner F.R."/>
        </authorList>
    </citation>
    <scope>NUCLEOTIDE SEQUENCE [LARGE SCALE GENOMIC DNA]</scope>
    <source>
        <strain>O157:H7 / EDL933 / ATCC 700927 / EHEC</strain>
    </source>
</reference>
<reference key="2">
    <citation type="journal article" date="2001" name="DNA Res.">
        <title>Complete genome sequence of enterohemorrhagic Escherichia coli O157:H7 and genomic comparison with a laboratory strain K-12.</title>
        <authorList>
            <person name="Hayashi T."/>
            <person name="Makino K."/>
            <person name="Ohnishi M."/>
            <person name="Kurokawa K."/>
            <person name="Ishii K."/>
            <person name="Yokoyama K."/>
            <person name="Han C.-G."/>
            <person name="Ohtsubo E."/>
            <person name="Nakayama K."/>
            <person name="Murata T."/>
            <person name="Tanaka M."/>
            <person name="Tobe T."/>
            <person name="Iida T."/>
            <person name="Takami H."/>
            <person name="Honda T."/>
            <person name="Sasakawa C."/>
            <person name="Ogasawara N."/>
            <person name="Yasunaga T."/>
            <person name="Kuhara S."/>
            <person name="Shiba T."/>
            <person name="Hattori M."/>
            <person name="Shinagawa H."/>
        </authorList>
    </citation>
    <scope>NUCLEOTIDE SEQUENCE [LARGE SCALE GENOMIC DNA]</scope>
    <source>
        <strain>O157:H7 / Sakai / RIMD 0509952 / EHEC</strain>
    </source>
</reference>
<protein>
    <recommendedName>
        <fullName evidence="1">Phosphopentomutase</fullName>
        <ecNumber evidence="1">5.4.2.7</ecNumber>
    </recommendedName>
    <alternativeName>
        <fullName evidence="1">Phosphodeoxyribomutase</fullName>
    </alternativeName>
</protein>
<comment type="function">
    <text evidence="1">Isomerase that catalyzes the conversion of deoxy-ribose 1-phosphate (dRib-1-P) and ribose 1-phosphate (Rib-1-P) to deoxy-ribose 5-phosphate (dRib-5-P) and ribose 5-phosphate (Rib-5-P), respectively.</text>
</comment>
<comment type="catalytic activity">
    <reaction evidence="1">
        <text>2-deoxy-alpha-D-ribose 1-phosphate = 2-deoxy-D-ribose 5-phosphate</text>
        <dbReference type="Rhea" id="RHEA:27658"/>
        <dbReference type="ChEBI" id="CHEBI:57259"/>
        <dbReference type="ChEBI" id="CHEBI:62877"/>
        <dbReference type="EC" id="5.4.2.7"/>
    </reaction>
</comment>
<comment type="catalytic activity">
    <reaction evidence="1">
        <text>alpha-D-ribose 1-phosphate = D-ribose 5-phosphate</text>
        <dbReference type="Rhea" id="RHEA:18793"/>
        <dbReference type="ChEBI" id="CHEBI:57720"/>
        <dbReference type="ChEBI" id="CHEBI:78346"/>
        <dbReference type="EC" id="5.4.2.7"/>
    </reaction>
</comment>
<comment type="cofactor">
    <cofactor evidence="1">
        <name>Mn(2+)</name>
        <dbReference type="ChEBI" id="CHEBI:29035"/>
    </cofactor>
    <text evidence="1">Binds 2 manganese ions.</text>
</comment>
<comment type="pathway">
    <text evidence="1">Carbohydrate degradation; 2-deoxy-D-ribose 1-phosphate degradation; D-glyceraldehyde 3-phosphate and acetaldehyde from 2-deoxy-alpha-D-ribose 1-phosphate: step 1/2.</text>
</comment>
<comment type="subcellular location">
    <subcellularLocation>
        <location evidence="1">Cytoplasm</location>
    </subcellularLocation>
</comment>
<comment type="similarity">
    <text evidence="1 2">Belongs to the phosphopentomutase family.</text>
</comment>